<proteinExistence type="inferred from homology"/>
<gene>
    <name evidence="1" type="primary">menD</name>
    <name type="ordered locus">Ent638_2814</name>
</gene>
<protein>
    <recommendedName>
        <fullName evidence="1">2-succinyl-5-enolpyruvyl-6-hydroxy-3-cyclohexene-1-carboxylate synthase</fullName>
        <shortName evidence="1">SEPHCHC synthase</shortName>
        <ecNumber evidence="1">2.2.1.9</ecNumber>
    </recommendedName>
    <alternativeName>
        <fullName evidence="1">Menaquinone biosynthesis protein MenD</fullName>
    </alternativeName>
</protein>
<comment type="function">
    <text evidence="1">Catalyzes the thiamine diphosphate-dependent decarboxylation of 2-oxoglutarate and the subsequent addition of the resulting succinic semialdehyde-thiamine pyrophosphate anion to isochorismate to yield 2-succinyl-5-enolpyruvyl-6-hydroxy-3-cyclohexene-1-carboxylate (SEPHCHC).</text>
</comment>
<comment type="catalytic activity">
    <reaction evidence="1">
        <text>isochorismate + 2-oxoglutarate + H(+) = 5-enolpyruvoyl-6-hydroxy-2-succinyl-cyclohex-3-ene-1-carboxylate + CO2</text>
        <dbReference type="Rhea" id="RHEA:25593"/>
        <dbReference type="ChEBI" id="CHEBI:15378"/>
        <dbReference type="ChEBI" id="CHEBI:16526"/>
        <dbReference type="ChEBI" id="CHEBI:16810"/>
        <dbReference type="ChEBI" id="CHEBI:29780"/>
        <dbReference type="ChEBI" id="CHEBI:58818"/>
        <dbReference type="EC" id="2.2.1.9"/>
    </reaction>
</comment>
<comment type="cofactor">
    <cofactor evidence="1">
        <name>Mg(2+)</name>
        <dbReference type="ChEBI" id="CHEBI:18420"/>
    </cofactor>
    <cofactor evidence="1">
        <name>Mn(2+)</name>
        <dbReference type="ChEBI" id="CHEBI:29035"/>
    </cofactor>
</comment>
<comment type="cofactor">
    <cofactor evidence="1">
        <name>thiamine diphosphate</name>
        <dbReference type="ChEBI" id="CHEBI:58937"/>
    </cofactor>
    <text evidence="1">Binds 1 thiamine pyrophosphate per subunit.</text>
</comment>
<comment type="pathway">
    <text evidence="1">Quinol/quinone metabolism; 1,4-dihydroxy-2-naphthoate biosynthesis; 1,4-dihydroxy-2-naphthoate from chorismate: step 2/7.</text>
</comment>
<comment type="pathway">
    <text evidence="1">Quinol/quinone metabolism; menaquinone biosynthesis.</text>
</comment>
<comment type="subunit">
    <text evidence="1">Homodimer.</text>
</comment>
<comment type="similarity">
    <text evidence="1">Belongs to the TPP enzyme family. MenD subfamily.</text>
</comment>
<sequence>MSVSSFNRRWAAVILEALTRHGVRHVCIAPGSRSTPLTLAAAENRAFIHHTHFDERGLGHLALGLAKVSKAPVAVIVTSGTAVANLYPALIEAGLTGEKLVLLTADRPPELIDCGANQAIRQPGIFASHPAEALSLPRPTQDIPASWLVSTLDHAMGTLRHGALHINCPFAEPLYGELNDTGVEWQQTLGDWWQSDKPWLRAQTHLQSGQQRDWFHWRQKRGVILAGRMTAAEGKQVAEWAKTLGWPLIGDVLSQTGQPLPCADLWLGNAKAVTELARAQIVIQLGSSLTGKRVLQWQSTCEPEEYWLVDSLEGRLDPAHHRGRRLVSTIGDWLEDHPAEKRQAWATDIPELSRLAWDLTTQQCERFGEAELAHRIRQYLPDQGQLFVGNSLVVRLIDALSKLPAGYPVYSNRGASGIDGLISTAAGVQRASTKPTLAIVGDLSALYDLNALALLRQASAPFVLIVVNNNGGQIFSLLPTPQSERERFYLMPQNVQFEHAAAMFSLKYHRPQSWSELDDAMSTAWRQPGATLIELVVNDSDGAQKLQHLLAQVSHL</sequence>
<accession>A4WCP9</accession>
<feature type="chain" id="PRO_0000341735" description="2-succinyl-5-enolpyruvyl-6-hydroxy-3-cyclohexene-1-carboxylate synthase">
    <location>
        <begin position="1"/>
        <end position="556"/>
    </location>
</feature>
<keyword id="KW-0460">Magnesium</keyword>
<keyword id="KW-0464">Manganese</keyword>
<keyword id="KW-0474">Menaquinone biosynthesis</keyword>
<keyword id="KW-0479">Metal-binding</keyword>
<keyword id="KW-0786">Thiamine pyrophosphate</keyword>
<keyword id="KW-0808">Transferase</keyword>
<dbReference type="EC" id="2.2.1.9" evidence="1"/>
<dbReference type="EMBL" id="CP000653">
    <property type="protein sequence ID" value="ABP61479.1"/>
    <property type="molecule type" value="Genomic_DNA"/>
</dbReference>
<dbReference type="RefSeq" id="WP_015959812.1">
    <property type="nucleotide sequence ID" value="NC_009436.1"/>
</dbReference>
<dbReference type="SMR" id="A4WCP9"/>
<dbReference type="STRING" id="399742.Ent638_2814"/>
<dbReference type="KEGG" id="ent:Ent638_2814"/>
<dbReference type="eggNOG" id="COG1165">
    <property type="taxonomic scope" value="Bacteria"/>
</dbReference>
<dbReference type="HOGENOM" id="CLU_006051_3_0_6"/>
<dbReference type="OrthoDB" id="9791859at2"/>
<dbReference type="UniPathway" id="UPA00079"/>
<dbReference type="UniPathway" id="UPA01057">
    <property type="reaction ID" value="UER00164"/>
</dbReference>
<dbReference type="Proteomes" id="UP000000230">
    <property type="component" value="Chromosome"/>
</dbReference>
<dbReference type="GO" id="GO:0070204">
    <property type="term" value="F:2-succinyl-5-enolpyruvyl-6-hydroxy-3-cyclohexene-1-carboxylic-acid synthase activity"/>
    <property type="evidence" value="ECO:0007669"/>
    <property type="project" value="UniProtKB-UniRule"/>
</dbReference>
<dbReference type="GO" id="GO:0000287">
    <property type="term" value="F:magnesium ion binding"/>
    <property type="evidence" value="ECO:0007669"/>
    <property type="project" value="UniProtKB-UniRule"/>
</dbReference>
<dbReference type="GO" id="GO:0030145">
    <property type="term" value="F:manganese ion binding"/>
    <property type="evidence" value="ECO:0007669"/>
    <property type="project" value="UniProtKB-UniRule"/>
</dbReference>
<dbReference type="GO" id="GO:0030976">
    <property type="term" value="F:thiamine pyrophosphate binding"/>
    <property type="evidence" value="ECO:0007669"/>
    <property type="project" value="UniProtKB-UniRule"/>
</dbReference>
<dbReference type="GO" id="GO:0009234">
    <property type="term" value="P:menaquinone biosynthetic process"/>
    <property type="evidence" value="ECO:0007669"/>
    <property type="project" value="UniProtKB-UniRule"/>
</dbReference>
<dbReference type="CDD" id="cd07037">
    <property type="entry name" value="TPP_PYR_MenD"/>
    <property type="match status" value="1"/>
</dbReference>
<dbReference type="CDD" id="cd02009">
    <property type="entry name" value="TPP_SHCHC_synthase"/>
    <property type="match status" value="1"/>
</dbReference>
<dbReference type="FunFam" id="3.40.50.970:FF:000029">
    <property type="entry name" value="2-succinyl-5-enolpyruvyl-6-hydroxy-3-cyclohexene-1-carboxylate synthase"/>
    <property type="match status" value="1"/>
</dbReference>
<dbReference type="Gene3D" id="3.40.50.970">
    <property type="match status" value="2"/>
</dbReference>
<dbReference type="Gene3D" id="3.40.50.1220">
    <property type="entry name" value="TPP-binding domain"/>
    <property type="match status" value="1"/>
</dbReference>
<dbReference type="HAMAP" id="MF_01659">
    <property type="entry name" value="MenD"/>
    <property type="match status" value="1"/>
</dbReference>
<dbReference type="InterPro" id="IPR004433">
    <property type="entry name" value="MenaQ_synth_MenD"/>
</dbReference>
<dbReference type="InterPro" id="IPR032264">
    <property type="entry name" value="MenD_middle"/>
</dbReference>
<dbReference type="InterPro" id="IPR029061">
    <property type="entry name" value="THDP-binding"/>
</dbReference>
<dbReference type="InterPro" id="IPR012001">
    <property type="entry name" value="Thiamin_PyroP_enz_TPP-bd_dom"/>
</dbReference>
<dbReference type="InterPro" id="IPR011766">
    <property type="entry name" value="TPP_enzyme_TPP-bd"/>
</dbReference>
<dbReference type="NCBIfam" id="TIGR00173">
    <property type="entry name" value="menD"/>
    <property type="match status" value="1"/>
</dbReference>
<dbReference type="PANTHER" id="PTHR42916">
    <property type="entry name" value="2-SUCCINYL-5-ENOLPYRUVYL-6-HYDROXY-3-CYCLOHEXENE-1-CARBOXYLATE SYNTHASE"/>
    <property type="match status" value="1"/>
</dbReference>
<dbReference type="PANTHER" id="PTHR42916:SF1">
    <property type="entry name" value="PROTEIN PHYLLO, CHLOROPLASTIC"/>
    <property type="match status" value="1"/>
</dbReference>
<dbReference type="Pfam" id="PF02775">
    <property type="entry name" value="TPP_enzyme_C"/>
    <property type="match status" value="1"/>
</dbReference>
<dbReference type="Pfam" id="PF16582">
    <property type="entry name" value="TPP_enzyme_M_2"/>
    <property type="match status" value="1"/>
</dbReference>
<dbReference type="Pfam" id="PF02776">
    <property type="entry name" value="TPP_enzyme_N"/>
    <property type="match status" value="1"/>
</dbReference>
<dbReference type="PIRSF" id="PIRSF004983">
    <property type="entry name" value="MenD"/>
    <property type="match status" value="1"/>
</dbReference>
<dbReference type="SUPFAM" id="SSF52518">
    <property type="entry name" value="Thiamin diphosphate-binding fold (THDP-binding)"/>
    <property type="match status" value="2"/>
</dbReference>
<evidence type="ECO:0000255" key="1">
    <source>
        <dbReference type="HAMAP-Rule" id="MF_01659"/>
    </source>
</evidence>
<organism>
    <name type="scientific">Enterobacter sp. (strain 638)</name>
    <dbReference type="NCBI Taxonomy" id="399742"/>
    <lineage>
        <taxon>Bacteria</taxon>
        <taxon>Pseudomonadati</taxon>
        <taxon>Pseudomonadota</taxon>
        <taxon>Gammaproteobacteria</taxon>
        <taxon>Enterobacterales</taxon>
        <taxon>Enterobacteriaceae</taxon>
        <taxon>Enterobacter</taxon>
    </lineage>
</organism>
<reference key="1">
    <citation type="journal article" date="2010" name="PLoS Genet.">
        <title>Genome sequence of the plant growth promoting endophytic bacterium Enterobacter sp. 638.</title>
        <authorList>
            <person name="Taghavi S."/>
            <person name="van der Lelie D."/>
            <person name="Hoffman A."/>
            <person name="Zhang Y.B."/>
            <person name="Walla M.D."/>
            <person name="Vangronsveld J."/>
            <person name="Newman L."/>
            <person name="Monchy S."/>
        </authorList>
    </citation>
    <scope>NUCLEOTIDE SEQUENCE [LARGE SCALE GENOMIC DNA]</scope>
    <source>
        <strain>638</strain>
    </source>
</reference>
<name>MEND_ENT38</name>